<protein>
    <recommendedName>
        <fullName>Probable cytosolic Fe-S cluster assembly factor CPIJ010948</fullName>
    </recommendedName>
</protein>
<dbReference type="EMBL" id="DS232100">
    <property type="protein sequence ID" value="EDS34771.1"/>
    <property type="status" value="ALT_SEQ"/>
    <property type="molecule type" value="Genomic_DNA"/>
</dbReference>
<dbReference type="RefSeq" id="XP_001870903.1">
    <property type="nucleotide sequence ID" value="XM_001870868.1"/>
</dbReference>
<dbReference type="SMR" id="B0WU52"/>
<dbReference type="FunCoup" id="B0WU52">
    <property type="interactions" value="495"/>
</dbReference>
<dbReference type="STRING" id="7176.B0WU52"/>
<dbReference type="KEGG" id="cqu:CpipJ_CPIJ010948"/>
<dbReference type="VEuPathDB" id="VectorBase:CPIJ010948"/>
<dbReference type="eggNOG" id="KOG2439">
    <property type="taxonomic scope" value="Eukaryota"/>
</dbReference>
<dbReference type="HOGENOM" id="CLU_018240_0_0_1"/>
<dbReference type="InParanoid" id="B0WU52"/>
<dbReference type="Proteomes" id="UP000002320">
    <property type="component" value="Unassembled WGS sequence"/>
</dbReference>
<dbReference type="GO" id="GO:0051539">
    <property type="term" value="F:4 iron, 4 sulfur cluster binding"/>
    <property type="evidence" value="ECO:0007669"/>
    <property type="project" value="UniProtKB-KW"/>
</dbReference>
<dbReference type="GO" id="GO:0046872">
    <property type="term" value="F:metal ion binding"/>
    <property type="evidence" value="ECO:0007669"/>
    <property type="project" value="UniProtKB-KW"/>
</dbReference>
<dbReference type="GO" id="GO:0016226">
    <property type="term" value="P:iron-sulfur cluster assembly"/>
    <property type="evidence" value="ECO:0000250"/>
    <property type="project" value="UniProtKB"/>
</dbReference>
<dbReference type="Gene3D" id="3.40.50.1780">
    <property type="match status" value="1"/>
</dbReference>
<dbReference type="Gene3D" id="3.40.950.10">
    <property type="entry name" value="Fe-only Hydrogenase (Larger Subunit), Chain L, domain 3"/>
    <property type="match status" value="1"/>
</dbReference>
<dbReference type="InterPro" id="IPR050340">
    <property type="entry name" value="Cytosolic_Fe-S_CAF"/>
</dbReference>
<dbReference type="InterPro" id="IPR009016">
    <property type="entry name" value="Fe_hydrogenase"/>
</dbReference>
<dbReference type="InterPro" id="IPR004108">
    <property type="entry name" value="Fe_hydrogenase_lsu_C"/>
</dbReference>
<dbReference type="InterPro" id="IPR003149">
    <property type="entry name" value="Fe_hydrogenase_ssu"/>
</dbReference>
<dbReference type="PANTHER" id="PTHR11615">
    <property type="entry name" value="NITRATE, FORMATE, IRON DEHYDROGENASE"/>
    <property type="match status" value="1"/>
</dbReference>
<dbReference type="Pfam" id="PF02906">
    <property type="entry name" value="Fe_hyd_lg_C"/>
    <property type="match status" value="1"/>
</dbReference>
<dbReference type="SMART" id="SM00902">
    <property type="entry name" value="Fe_hyd_SSU"/>
    <property type="match status" value="1"/>
</dbReference>
<dbReference type="SUPFAM" id="SSF53920">
    <property type="entry name" value="Fe-only hydrogenase"/>
    <property type="match status" value="1"/>
</dbReference>
<name>NARF_CULQU</name>
<proteinExistence type="inferred from homology"/>
<comment type="function">
    <text evidence="1">Component of the cytosolic iron-sulfur (Fe/S) protein assembly machinery. Required for maturation of extramitochondrial Fe/S proteins (By similarity).</text>
</comment>
<comment type="similarity">
    <text evidence="3">Belongs to the NARF family.</text>
</comment>
<comment type="sequence caution" evidence="3">
    <conflict type="erroneous gene model prediction">
        <sequence resource="EMBL-CDS" id="EDS34771"/>
    </conflict>
</comment>
<accession>B0WU52</accession>
<reference key="1">
    <citation type="submission" date="2007-03" db="EMBL/GenBank/DDBJ databases">
        <title>Annotation of Culex pipiens quinquefasciatus.</title>
        <authorList>
            <consortium name="The Broad Institute Genome Sequencing Platform"/>
            <person name="Atkinson P.W."/>
            <person name="Hemingway J."/>
            <person name="Christensen B.M."/>
            <person name="Higgs S."/>
            <person name="Kodira C.D."/>
            <person name="Hannick L.I."/>
            <person name="Megy K."/>
            <person name="O'Leary S.B."/>
            <person name="Pearson M."/>
            <person name="Haas B.J."/>
            <person name="Mauceli E."/>
            <person name="Wortman J.R."/>
            <person name="Lee N.H."/>
            <person name="Guigo R."/>
            <person name="Stanke M."/>
            <person name="Alvarado L."/>
            <person name="Amedeo P."/>
            <person name="Antoine C.H."/>
            <person name="Arensburger P."/>
            <person name="Bidwell S.L."/>
            <person name="Crawford M."/>
            <person name="Camaro F."/>
            <person name="Devon K."/>
            <person name="Engels R."/>
            <person name="Hammond M."/>
            <person name="Howarth C."/>
            <person name="Koehrsen M."/>
            <person name="Lawson D."/>
            <person name="Montgomery P."/>
            <person name="Nene V."/>
            <person name="Nusbaum C."/>
            <person name="Puiu D."/>
            <person name="Romero-Severson J."/>
            <person name="Severson D.W."/>
            <person name="Shumway M."/>
            <person name="Sisk P."/>
            <person name="Stolte C."/>
            <person name="Zeng Q."/>
            <person name="Eisenstadt E."/>
            <person name="Fraser-Liggett C.M."/>
            <person name="Strausberg R."/>
            <person name="Galagan J."/>
            <person name="Birren B."/>
            <person name="Collins F.H."/>
        </authorList>
    </citation>
    <scope>NUCLEOTIDE SEQUENCE [LARGE SCALE GENOMIC DNA]</scope>
    <source>
        <strain>JHB</strain>
    </source>
</reference>
<gene>
    <name type="ORF">CPIJ010948</name>
</gene>
<evidence type="ECO:0000250" key="1"/>
<evidence type="ECO:0000255" key="2"/>
<evidence type="ECO:0000305" key="3"/>
<keyword id="KW-0004">4Fe-4S</keyword>
<keyword id="KW-0408">Iron</keyword>
<keyword id="KW-0411">Iron-sulfur</keyword>
<keyword id="KW-0479">Metal-binding</keyword>
<keyword id="KW-1185">Reference proteome</keyword>
<feature type="chain" id="PRO_0000383698" description="Probable cytosolic Fe-S cluster assembly factor CPIJ010948">
    <location>
        <begin position="1"/>
        <end position="478"/>
    </location>
</feature>
<feature type="binding site" evidence="2">
    <location>
        <position position="23"/>
    </location>
    <ligand>
        <name>[4Fe-4S] cluster</name>
        <dbReference type="ChEBI" id="CHEBI:49883"/>
        <label>1</label>
    </ligand>
</feature>
<feature type="binding site" evidence="2">
    <location>
        <position position="69"/>
    </location>
    <ligand>
        <name>[4Fe-4S] cluster</name>
        <dbReference type="ChEBI" id="CHEBI:49883"/>
        <label>1</label>
    </ligand>
</feature>
<feature type="binding site" evidence="2">
    <location>
        <position position="72"/>
    </location>
    <ligand>
        <name>[4Fe-4S] cluster</name>
        <dbReference type="ChEBI" id="CHEBI:49883"/>
        <label>1</label>
    </ligand>
</feature>
<feature type="binding site" evidence="2">
    <location>
        <position position="75"/>
    </location>
    <ligand>
        <name>[4Fe-4S] cluster</name>
        <dbReference type="ChEBI" id="CHEBI:49883"/>
        <label>1</label>
    </ligand>
</feature>
<feature type="binding site" evidence="2">
    <location>
        <position position="189"/>
    </location>
    <ligand>
        <name>[4Fe-4S] cluster</name>
        <dbReference type="ChEBI" id="CHEBI:49883"/>
        <label>2</label>
    </ligand>
</feature>
<feature type="binding site" evidence="2">
    <location>
        <position position="245"/>
    </location>
    <ligand>
        <name>[4Fe-4S] cluster</name>
        <dbReference type="ChEBI" id="CHEBI:49883"/>
        <label>2</label>
    </ligand>
</feature>
<feature type="binding site" evidence="2">
    <location>
        <position position="396"/>
    </location>
    <ligand>
        <name>[4Fe-4S] cluster</name>
        <dbReference type="ChEBI" id="CHEBI:49883"/>
        <label>2</label>
    </ligand>
</feature>
<feature type="binding site" evidence="2">
    <location>
        <position position="400"/>
    </location>
    <ligand>
        <name>[4Fe-4S] cluster</name>
        <dbReference type="ChEBI" id="CHEBI:49883"/>
        <label>2</label>
    </ligand>
</feature>
<sequence length="478" mass="53470">MSRFSGALQLTDLDDFITPSQECIKPVKIEANKSKTGSKITIQDDGSYMQATSSGLQKLEKVEITLADCLACSGCITSAEGVLITQQSQEELLKVMNENNLAKLNNQLDAVRFIVFTVAQQPILSLAKRYNLPAEETFERVAGYFRKLGADLVVDTKIADDLALIEGRNEFIERFNTNRQTLPMLASSCPGFVCYAEKTHGSFILPYIASTRSPQQIMGVLVKKYLAKLLGIAADRIYHVTVMPCYDKKLEASREDFFSDVENCRDVDCVITSIEIEQMLDGSGVQALQIVEKAPIDWPWSTGRPPVFVWGHESSGSGGYSEYLFKYAARKLFNVAVDHVEFKNLRNSDLREAVLEQNGEVVLRFAIANGFRNIQNMVQKLKRGKCNYHYIEIMACPSGCLNGGAQIRPTGGQSQRELTAELEALYRSLPASNPENEAVEMVYTTFLDNAGDNNMRKEFLHTSYHPIEKMNTALNIKW</sequence>
<organism>
    <name type="scientific">Culex quinquefasciatus</name>
    <name type="common">Southern house mosquito</name>
    <name type="synonym">Culex pungens</name>
    <dbReference type="NCBI Taxonomy" id="7176"/>
    <lineage>
        <taxon>Eukaryota</taxon>
        <taxon>Metazoa</taxon>
        <taxon>Ecdysozoa</taxon>
        <taxon>Arthropoda</taxon>
        <taxon>Hexapoda</taxon>
        <taxon>Insecta</taxon>
        <taxon>Pterygota</taxon>
        <taxon>Neoptera</taxon>
        <taxon>Endopterygota</taxon>
        <taxon>Diptera</taxon>
        <taxon>Nematocera</taxon>
        <taxon>Culicoidea</taxon>
        <taxon>Culicidae</taxon>
        <taxon>Culicinae</taxon>
        <taxon>Culicini</taxon>
        <taxon>Culex</taxon>
        <taxon>Culex</taxon>
    </lineage>
</organism>